<accession>A0A1L7U5T4</accession>
<evidence type="ECO:0000269" key="1">
    <source ref="2"/>
</evidence>
<evidence type="ECO:0000303" key="2">
    <source ref="2"/>
</evidence>
<evidence type="ECO:0000305" key="3"/>
<evidence type="ECO:0000305" key="4">
    <source ref="2"/>
</evidence>
<dbReference type="EC" id="1.1.1.-" evidence="4"/>
<dbReference type="EMBL" id="FCQH01000013">
    <property type="protein sequence ID" value="CVL02466.1"/>
    <property type="molecule type" value="Genomic_DNA"/>
</dbReference>
<dbReference type="SMR" id="A0A1L7U5T4"/>
<dbReference type="VEuPathDB" id="FungiDB:FMAN_00003"/>
<dbReference type="Proteomes" id="UP000184255">
    <property type="component" value="Unassembled WGS sequence"/>
</dbReference>
<dbReference type="GO" id="GO:0005737">
    <property type="term" value="C:cytoplasm"/>
    <property type="evidence" value="ECO:0007669"/>
    <property type="project" value="TreeGrafter"/>
</dbReference>
<dbReference type="GO" id="GO:0000166">
    <property type="term" value="F:nucleotide binding"/>
    <property type="evidence" value="ECO:0007669"/>
    <property type="project" value="InterPro"/>
</dbReference>
<dbReference type="GO" id="GO:0016491">
    <property type="term" value="F:oxidoreductase activity"/>
    <property type="evidence" value="ECO:0007669"/>
    <property type="project" value="UniProtKB-KW"/>
</dbReference>
<dbReference type="GO" id="GO:0006740">
    <property type="term" value="P:NADPH regeneration"/>
    <property type="evidence" value="ECO:0007669"/>
    <property type="project" value="TreeGrafter"/>
</dbReference>
<dbReference type="Gene3D" id="3.30.360.10">
    <property type="entry name" value="Dihydrodipicolinate Reductase, domain 2"/>
    <property type="match status" value="1"/>
</dbReference>
<dbReference type="Gene3D" id="3.40.50.720">
    <property type="entry name" value="NAD(P)-binding Rossmann-like Domain"/>
    <property type="match status" value="1"/>
</dbReference>
<dbReference type="InterPro" id="IPR004104">
    <property type="entry name" value="Gfo/Idh/MocA-like_OxRdtase_C"/>
</dbReference>
<dbReference type="InterPro" id="IPR000683">
    <property type="entry name" value="Gfo/Idh/MocA-like_OxRdtase_N"/>
</dbReference>
<dbReference type="InterPro" id="IPR036291">
    <property type="entry name" value="NAD(P)-bd_dom_sf"/>
</dbReference>
<dbReference type="PANTHER" id="PTHR42840:SF5">
    <property type="entry name" value="NAD(P)-BINDING ROSSMANN-FOLD SUPERFAMILY PROTEIN"/>
    <property type="match status" value="1"/>
</dbReference>
<dbReference type="PANTHER" id="PTHR42840">
    <property type="entry name" value="NAD(P)-BINDING ROSSMANN-FOLD SUPERFAMILY PROTEIN-RELATED"/>
    <property type="match status" value="1"/>
</dbReference>
<dbReference type="Pfam" id="PF01408">
    <property type="entry name" value="GFO_IDH_MocA"/>
    <property type="match status" value="1"/>
</dbReference>
<dbReference type="Pfam" id="PF02894">
    <property type="entry name" value="GFO_IDH_MocA_C"/>
    <property type="match status" value="1"/>
</dbReference>
<dbReference type="SUPFAM" id="SSF55347">
    <property type="entry name" value="Glyceraldehyde-3-phosphate dehydrogenase-like, C-terminal domain"/>
    <property type="match status" value="1"/>
</dbReference>
<dbReference type="SUPFAM" id="SSF51735">
    <property type="entry name" value="NAD(P)-binding Rossmann-fold domains"/>
    <property type="match status" value="1"/>
</dbReference>
<name>FPY6_FUSMA</name>
<gene>
    <name evidence="2" type="primary">FPY6</name>
    <name type="ORF">FMAN_00003</name>
</gene>
<reference key="1">
    <citation type="journal article" date="2016" name="Genome Biol. Evol.">
        <title>Comparative 'omics' of the Fusarium fujikuroi species complex highlights differences in genetic potential and metabolite synthesis.</title>
        <authorList>
            <person name="Niehaus E.-M."/>
            <person name="Muensterkoetter M."/>
            <person name="Proctor R.H."/>
            <person name="Brown D.W."/>
            <person name="Sharon A."/>
            <person name="Idan Y."/>
            <person name="Oren-Young L."/>
            <person name="Sieber C.M."/>
            <person name="Novak O."/>
            <person name="Pencik A."/>
            <person name="Tarkowska D."/>
            <person name="Hromadova K."/>
            <person name="Freeman S."/>
            <person name="Maymon M."/>
            <person name="Elazar M."/>
            <person name="Youssef S.A."/>
            <person name="El-Shabrawy E.S.M."/>
            <person name="Shalaby A.B.A."/>
            <person name="Houterman P."/>
            <person name="Brock N.L."/>
            <person name="Burkhardt I."/>
            <person name="Tsavkelova E.A."/>
            <person name="Dickschat J.S."/>
            <person name="Galuszka P."/>
            <person name="Gueldener U."/>
            <person name="Tudzynski B."/>
        </authorList>
    </citation>
    <scope>NUCLEOTIDE SEQUENCE [LARGE SCALE GENOMIC DNA]</scope>
    <source>
        <strain>MRC7560</strain>
    </source>
</reference>
<reference key="2">
    <citation type="journal article" date="2021" name="Front. Fungal Biol.">
        <title>Biosynthesis of fusapyrone depends on the H3K9 methyltransferase, FmKmt1, in Fusarium mangiferae.</title>
        <authorList>
            <person name="Atanasoff-Kardjalieff A.K."/>
            <person name="Luenne F."/>
            <person name="Kalinina S."/>
            <person name="Strauss J."/>
            <person name="Humpf H.U."/>
            <person name="Studt-Reinhold L."/>
        </authorList>
    </citation>
    <scope>FUNCTION</scope>
    <scope>INDUCTION</scope>
</reference>
<protein>
    <recommendedName>
        <fullName evidence="2">Dehydrogenase FPY6</fullName>
        <ecNumber evidence="4">1.1.1.-</ecNumber>
    </recommendedName>
    <alternativeName>
        <fullName evidence="2">Fusapyrone biosynthesis cluster protein 6</fullName>
    </alternativeName>
</protein>
<sequence>MVGIALLGAGIFAREQHLPAIESVGHLNLKAVYSRSEEAAISLAKQARDRVDIYFDSPPTSGRSLDDLLARSDIAAVAACATILVQPLLIRKALRAGKHVLSEKPIAQDTATAMGLVQWYSSQSSPPIWAVAENFRFNESLRYAEMRTQEIGGELASFRLTYYGLIRKENKYFKTEWRKTPEFQGGFLLDSGIHFIASLRLLLRAVGQEPKEVMALSSLLKEHLHPVDTIHAVVSTIDSRHGTVCISFGVEHISTLEIEIISTRGVIVWTPVSVTSIIKSDSGESMNEKKEFIYNNGVKAEFEAFCQAILQNSPDPRQSPLEALRDLALLQSLLGSAACDGSMKLVKFE</sequence>
<proteinExistence type="evidence at transcript level"/>
<keyword id="KW-0520">NAD</keyword>
<keyword id="KW-0521">NADP</keyword>
<keyword id="KW-0560">Oxidoreductase</keyword>
<feature type="chain" id="PRO_0000458180" description="Dehydrogenase FPY6">
    <location>
        <begin position="1"/>
        <end position="349"/>
    </location>
</feature>
<comment type="function">
    <text evidence="1 4">Dehydrogenase; part of the gene cluster that mediates the biosynthesis of the gamma-pyrones fusapyrone (FPY) and deoxyfusapyrone (dFPY) (Ref.2). FPY is an undecaketide and thus likely synthesized by the polyketide synthase FPY1 from acetyl-CoA functioning as starter unit and the addition of 10 malonyl-CoA extender units by successive Claisen-condensations. Next to this, FPY shares some rare features: C-glycosylated 4-deoxyglucose at C-3, a gem-dimethyl group at C-13, and an alpha-beta to beta-gamma double bond shift at C-20. During FPY biosynthesis mono-C-methyl groups are transferred to the tetra-, penta-, hexa- and heptaketide, while two C-methyl groups are transferred to the nonaketide, suggesting that the CMet domain is programmed to selectively catalyze two successive C-alpha-methylation reactions of the nonaketide, while other alpha-carbons are non- or mono-methylated only. While the origin of the 4'-deoxyglucose moiety remains opaque, its transfer to C-3 is most likely mediated by the C-glycosyltransferase FPY2. Next to this, the hydroxyl group present at C-33 and discriminating between FPY and dFPY, is likely to be installed by the cytochrome P450 monooxygenase FPY7. No putative function can be predicted for the remaining genes FPY3-FPY6 (Probable).</text>
</comment>
<comment type="pathway">
    <text evidence="4">Secondary metabolite biosynthesis.</text>
</comment>
<comment type="induction">
    <text evidence="1">Expression is induced in the presence of 6mM glutamine.</text>
</comment>
<comment type="similarity">
    <text evidence="3">Belongs to the Gfo/Idh/MocA family.</text>
</comment>
<organism>
    <name type="scientific">Fusarium mangiferae</name>
    <name type="common">Mango malformation disease fungus</name>
    <dbReference type="NCBI Taxonomy" id="192010"/>
    <lineage>
        <taxon>Eukaryota</taxon>
        <taxon>Fungi</taxon>
        <taxon>Dikarya</taxon>
        <taxon>Ascomycota</taxon>
        <taxon>Pezizomycotina</taxon>
        <taxon>Sordariomycetes</taxon>
        <taxon>Hypocreomycetidae</taxon>
        <taxon>Hypocreales</taxon>
        <taxon>Nectriaceae</taxon>
        <taxon>Fusarium</taxon>
        <taxon>Fusarium fujikuroi species complex</taxon>
    </lineage>
</organism>